<dbReference type="EMBL" id="CP001048">
    <property type="protein sequence ID" value="ACC88504.1"/>
    <property type="molecule type" value="Genomic_DNA"/>
</dbReference>
<dbReference type="RefSeq" id="WP_012413608.1">
    <property type="nucleotide sequence ID" value="NZ_CP009780.1"/>
</dbReference>
<dbReference type="SMR" id="B2JYQ7"/>
<dbReference type="GeneID" id="49786486"/>
<dbReference type="KEGG" id="ypb:YPTS_1532"/>
<dbReference type="PATRIC" id="fig|502801.10.peg.899"/>
<dbReference type="GO" id="GO:0005737">
    <property type="term" value="C:cytoplasm"/>
    <property type="evidence" value="ECO:0007669"/>
    <property type="project" value="UniProtKB-UniRule"/>
</dbReference>
<dbReference type="GO" id="GO:0009295">
    <property type="term" value="C:nucleoid"/>
    <property type="evidence" value="ECO:0007669"/>
    <property type="project" value="UniProtKB-SubCell"/>
</dbReference>
<dbReference type="GO" id="GO:0005524">
    <property type="term" value="F:ATP binding"/>
    <property type="evidence" value="ECO:0007669"/>
    <property type="project" value="UniProtKB-UniRule"/>
</dbReference>
<dbReference type="GO" id="GO:0003677">
    <property type="term" value="F:DNA binding"/>
    <property type="evidence" value="ECO:0007669"/>
    <property type="project" value="UniProtKB-UniRule"/>
</dbReference>
<dbReference type="GO" id="GO:0051301">
    <property type="term" value="P:cell division"/>
    <property type="evidence" value="ECO:0007669"/>
    <property type="project" value="UniProtKB-KW"/>
</dbReference>
<dbReference type="GO" id="GO:0030261">
    <property type="term" value="P:chromosome condensation"/>
    <property type="evidence" value="ECO:0007669"/>
    <property type="project" value="UniProtKB-KW"/>
</dbReference>
<dbReference type="GO" id="GO:0007059">
    <property type="term" value="P:chromosome segregation"/>
    <property type="evidence" value="ECO:0007669"/>
    <property type="project" value="UniProtKB-UniRule"/>
</dbReference>
<dbReference type="GO" id="GO:0006260">
    <property type="term" value="P:DNA replication"/>
    <property type="evidence" value="ECO:0007669"/>
    <property type="project" value="UniProtKB-UniRule"/>
</dbReference>
<dbReference type="FunFam" id="3.30.70.3500:FF:000001">
    <property type="entry name" value="Chromosome partition protein MukB"/>
    <property type="match status" value="1"/>
</dbReference>
<dbReference type="FunFam" id="3.40.1140.10:FF:000001">
    <property type="entry name" value="Chromosome partition protein MukB"/>
    <property type="match status" value="1"/>
</dbReference>
<dbReference type="FunFam" id="3.40.1140.10:FF:000002">
    <property type="entry name" value="Chromosome partition protein MukB"/>
    <property type="match status" value="1"/>
</dbReference>
<dbReference type="Gene3D" id="1.10.287.1490">
    <property type="match status" value="1"/>
</dbReference>
<dbReference type="Gene3D" id="1.20.58.850">
    <property type="match status" value="1"/>
</dbReference>
<dbReference type="Gene3D" id="3.40.1140.10">
    <property type="match status" value="2"/>
</dbReference>
<dbReference type="Gene3D" id="1.20.5.420">
    <property type="entry name" value="Immunoglobulin FC, subunit C"/>
    <property type="match status" value="1"/>
</dbReference>
<dbReference type="Gene3D" id="3.30.70.3500">
    <property type="entry name" value="MukB, hinge domain"/>
    <property type="match status" value="1"/>
</dbReference>
<dbReference type="HAMAP" id="MF_01800">
    <property type="entry name" value="MukB"/>
    <property type="match status" value="1"/>
</dbReference>
<dbReference type="InterPro" id="IPR012090">
    <property type="entry name" value="MukB"/>
</dbReference>
<dbReference type="InterPro" id="IPR050308">
    <property type="entry name" value="MukB/SMC"/>
</dbReference>
<dbReference type="InterPro" id="IPR032520">
    <property type="entry name" value="MukB_hinge"/>
</dbReference>
<dbReference type="InterPro" id="IPR042501">
    <property type="entry name" value="MukB_hinge_sf"/>
</dbReference>
<dbReference type="InterPro" id="IPR007406">
    <property type="entry name" value="MukB_N_dom"/>
</dbReference>
<dbReference type="InterPro" id="IPR027417">
    <property type="entry name" value="P-loop_NTPase"/>
</dbReference>
<dbReference type="NCBIfam" id="NF003422">
    <property type="entry name" value="PRK04863.1"/>
    <property type="match status" value="1"/>
</dbReference>
<dbReference type="PANTHER" id="PTHR42963">
    <property type="entry name" value="CHROMOSOME PARTITION PROTEIN MUKB"/>
    <property type="match status" value="1"/>
</dbReference>
<dbReference type="PANTHER" id="PTHR42963:SF1">
    <property type="entry name" value="DUF4476 DOMAIN-CONTAINING PROTEIN"/>
    <property type="match status" value="1"/>
</dbReference>
<dbReference type="Pfam" id="PF04310">
    <property type="entry name" value="MukB"/>
    <property type="match status" value="1"/>
</dbReference>
<dbReference type="Pfam" id="PF16330">
    <property type="entry name" value="MukB_hinge"/>
    <property type="match status" value="1"/>
</dbReference>
<dbReference type="Pfam" id="PF13558">
    <property type="entry name" value="SbcC_Walker_B"/>
    <property type="match status" value="1"/>
</dbReference>
<dbReference type="PIRSF" id="PIRSF005246">
    <property type="entry name" value="MukB"/>
    <property type="match status" value="1"/>
</dbReference>
<dbReference type="SUPFAM" id="SSF52540">
    <property type="entry name" value="P-loop containing nucleoside triphosphate hydrolases"/>
    <property type="match status" value="2"/>
</dbReference>
<organism>
    <name type="scientific">Yersinia pseudotuberculosis serotype IB (strain PB1/+)</name>
    <dbReference type="NCBI Taxonomy" id="502801"/>
    <lineage>
        <taxon>Bacteria</taxon>
        <taxon>Pseudomonadati</taxon>
        <taxon>Pseudomonadota</taxon>
        <taxon>Gammaproteobacteria</taxon>
        <taxon>Enterobacterales</taxon>
        <taxon>Yersiniaceae</taxon>
        <taxon>Yersinia</taxon>
    </lineage>
</organism>
<protein>
    <recommendedName>
        <fullName evidence="1">Chromosome partition protein MukB</fullName>
    </recommendedName>
    <alternativeName>
        <fullName evidence="1">Structural maintenance of chromosome-related protein</fullName>
    </alternativeName>
</protein>
<evidence type="ECO:0000255" key="1">
    <source>
        <dbReference type="HAMAP-Rule" id="MF_01800"/>
    </source>
</evidence>
<keyword id="KW-0067">ATP-binding</keyword>
<keyword id="KW-0131">Cell cycle</keyword>
<keyword id="KW-0132">Cell division</keyword>
<keyword id="KW-0159">Chromosome partition</keyword>
<keyword id="KW-0175">Coiled coil</keyword>
<keyword id="KW-0963">Cytoplasm</keyword>
<keyword id="KW-0226">DNA condensation</keyword>
<keyword id="KW-0238">DNA-binding</keyword>
<keyword id="KW-0547">Nucleotide-binding</keyword>
<proteinExistence type="inferred from homology"/>
<feature type="chain" id="PRO_1000187492" description="Chromosome partition protein MukB">
    <location>
        <begin position="1"/>
        <end position="1485"/>
    </location>
</feature>
<feature type="region of interest" description="Flexible hinge" evidence="1">
    <location>
        <begin position="666"/>
        <end position="783"/>
    </location>
</feature>
<feature type="coiled-coil region" evidence="1">
    <location>
        <begin position="337"/>
        <end position="480"/>
    </location>
</feature>
<feature type="coiled-coil region" evidence="1">
    <location>
        <begin position="509"/>
        <end position="605"/>
    </location>
</feature>
<feature type="coiled-coil region" evidence="1">
    <location>
        <begin position="835"/>
        <end position="915"/>
    </location>
</feature>
<feature type="coiled-coil region" evidence="1">
    <location>
        <begin position="977"/>
        <end position="1116"/>
    </location>
</feature>
<feature type="binding site" evidence="1">
    <location>
        <begin position="34"/>
        <end position="41"/>
    </location>
    <ligand>
        <name>ATP</name>
        <dbReference type="ChEBI" id="CHEBI:30616"/>
    </ligand>
</feature>
<name>MUKB_YERPB</name>
<reference key="1">
    <citation type="submission" date="2008-04" db="EMBL/GenBank/DDBJ databases">
        <title>Complete sequence of Yersinia pseudotuberculosis PB1/+.</title>
        <authorList>
            <person name="Copeland A."/>
            <person name="Lucas S."/>
            <person name="Lapidus A."/>
            <person name="Glavina del Rio T."/>
            <person name="Dalin E."/>
            <person name="Tice H."/>
            <person name="Bruce D."/>
            <person name="Goodwin L."/>
            <person name="Pitluck S."/>
            <person name="Munk A.C."/>
            <person name="Brettin T."/>
            <person name="Detter J.C."/>
            <person name="Han C."/>
            <person name="Tapia R."/>
            <person name="Schmutz J."/>
            <person name="Larimer F."/>
            <person name="Land M."/>
            <person name="Hauser L."/>
            <person name="Challacombe J.F."/>
            <person name="Green L."/>
            <person name="Lindler L.E."/>
            <person name="Nikolich M.P."/>
            <person name="Richardson P."/>
        </authorList>
    </citation>
    <scope>NUCLEOTIDE SEQUENCE [LARGE SCALE GENOMIC DNA]</scope>
    <source>
        <strain>PB1/+</strain>
    </source>
</reference>
<gene>
    <name evidence="1" type="primary">mukB</name>
    <name type="ordered locus">YPTS_1532</name>
</gene>
<sequence length="1485" mass="169879">MIERGKFRSLTLVNWNGFFARTFDLDELVTTLSGGNGAGKSTTMAAFVTALIPDLTLLHFRNTTEAGATSGSRDKGLHGKLRAGVCYSTLDVVNSRHQRVVVGVRLQQVAGRDRKVDIKPFTIQGLPTAIQPTEILTELVAERQARVLSLPELKERVEAMEGVQFKQFNSITDYHSLMFDLGVIPKRLRSSADRSKFYRLIEASLYGGISSAITRSLRDYLLPENSGVRKAFQDMEAALRENRMTLEAIRVTQSDRDLFKHLISEATSYVAADYMRHANERRIHLDSALVLRRDLFSSRKQLVTEQYRHVEMSRELAEQSGAESDLETDYQAASDHLNLVQTAMRQQEKIERYQSDLEELTYRLEEQSEVVSEASEQQADNEARAEAAELEVDELKSQLADYQQALDVQQTRAIQYQQALQALERARALCQLPELTADNAEEWLETFHAKEQEATESLLQLEQKLSVADAAHSQFEQAYQLVVNIAGEVSRSEAWQTARELLRDWPSQQHLAERVQPLRMRLSELEQRLRAQQDAERLLQEFCKRQGNAYQPEELEALQRELESQVEELSLSVSDAGERRMAMRQELEQLKLKIQELTARAPVWLAAQDALSQLSEQSGEALEDSRQVTEYMQQLLERERETTVERDEIAASKRAIEAQIERLSQPSGAEDARLIALAERFGGVLLSEIYDDVTIDDAPYFSALYGPSRHGIVVPDLSLVREHLQGLDDCPEDLYLIEGDPQSFDDSVFAVEEHEKAVVVKIADRQWRYSRYPEVPLFGRAARENRLETLYQERDRLAERYATLSFDVQKTQRTHQAFSRFIGSHLAVAFDADPEAEIRLLNTRRGEIERALNAHEDQNQQQRQQFDQAKEGISALNRLIPLVSLLLDETLADRVEEITEELAEAQEAARYIQQHGVSLTKLEPLLSVLQSDPQQHEQLQESYVLAQNSQRLAKQQAFALTEVVQRRAHFSYTDSAGMLTENSDLNDKLRQRLEQAEAERTRAREQLRQYQSQFTQYSQVLASLKSSYDAKRDMLKELSQELVDIGVPADANAEARARARRDELHAALSTNRSRRNQLEKQLTFCEAEMDSLQKKLRKLERDYHQIREQVVNAKAGWCAVMRMVKDNGVERRLHRRELAYMDGDELRSMSDKALGALRLAVADNEHLRDVLRLSEDPKRPERKIQFYIAVYQHLRERIRQDIIRTDDPVEAIEQMEIELGRLTEELTAREQKLAISSKSVSNIIRKTIHREQNRIRMLNQGLQAVSFGQVKSVRLNVNVREAHATLLDVLSEQQEQHQDLFNSNRLTFSEALAKLYQRLNPQMDMGQRLPQTIGEELLDYRNYLELEVEVYRGADGWLRAESGALSTGEAIGTGMSILVMVVQSWEEESRRLRGKDISPCRLLFLDEAARLDAKSIATLFELCERLEMQLIIAAPENISPEKGTTYKLVRKVFQNHEHVHVVGLRGFANEMPSLPPIAAELQQGG</sequence>
<accession>B2JYQ7</accession>
<comment type="function">
    <text evidence="1">Plays a central role in chromosome condensation, segregation and cell cycle progression. Functions as a homodimer, which is essential for chromosome partition. Involved in negative DNA supercoiling in vivo, and by this means organize and compact chromosomes. May achieve or facilitate chromosome segregation by condensation DNA from both sides of a centrally located replisome during cell division.</text>
</comment>
<comment type="subunit">
    <text evidence="1">Homodimerization via its hinge domain. Binds to DNA via its C-terminal region. Interacts, and probably forms a ternary complex, with MukE and MukF via its C-terminal region. The complex formation is stimulated by calcium or magnesium. Interacts with tubulin-related protein FtsZ.</text>
</comment>
<comment type="subcellular location">
    <subcellularLocation>
        <location evidence="1">Cytoplasm</location>
        <location evidence="1">Nucleoid</location>
    </subcellularLocation>
    <text evidence="1">Restricted to the nucleoid region.</text>
</comment>
<comment type="domain">
    <text evidence="1">The hinge domain, which separates the large intramolecular coiled coil regions, allows the homodimerization, forming a V-shaped homodimer.</text>
</comment>
<comment type="similarity">
    <text evidence="1">Belongs to the SMC family. MukB subfamily.</text>
</comment>